<keyword id="KW-1185">Reference proteome</keyword>
<keyword id="KW-0687">Ribonucleoprotein</keyword>
<keyword id="KW-0689">Ribosomal protein</keyword>
<evidence type="ECO:0000255" key="1">
    <source>
        <dbReference type="HAMAP-Rule" id="MF_00291"/>
    </source>
</evidence>
<evidence type="ECO:0000256" key="2">
    <source>
        <dbReference type="SAM" id="MobiDB-lite"/>
    </source>
</evidence>
<evidence type="ECO:0000305" key="3"/>
<sequence length="291" mass="32877">MAVVTMKNLLESGVHFGHQVKRWDPRMKKYIFSERNGIHIIDLQKTIVAIREAYEAVRKTTSEGKSVLFVGTKKQAQQTIQKEAERCGMFYINNRWLGGMLTNFSTIKKSLARLKKIEKMEVDGTFDNLTKKEIASLQKEKSKLEKNLGGIKEMKDLPGILFIIDTRKEEIAIREARSLGIPIIAVVDTNCNPEGIDYPIPGNDDAIRAISLFTGVIANAVIEADNEHGLKIIENLQEDEESGDSGVDPYQDREEEITDYSNYTPKDEASGDDEDEEDNSLVNDEDLYDDK</sequence>
<feature type="chain" id="PRO_0000134266" description="Small ribosomal subunit protein uS2">
    <location>
        <begin position="1"/>
        <end position="291"/>
    </location>
</feature>
<feature type="region of interest" description="Disordered" evidence="2">
    <location>
        <begin position="235"/>
        <end position="291"/>
    </location>
</feature>
<feature type="compositionally biased region" description="Acidic residues" evidence="2">
    <location>
        <begin position="270"/>
        <end position="291"/>
    </location>
</feature>
<reference key="1">
    <citation type="journal article" date="2004" name="Proc. Natl. Acad. Sci. U.S.A.">
        <title>Comparison of the genome of the oral pathogen Treponema denticola with other spirochete genomes.</title>
        <authorList>
            <person name="Seshadri R."/>
            <person name="Myers G.S.A."/>
            <person name="Tettelin H."/>
            <person name="Eisen J.A."/>
            <person name="Heidelberg J.F."/>
            <person name="Dodson R.J."/>
            <person name="Davidsen T.M."/>
            <person name="DeBoy R.T."/>
            <person name="Fouts D.E."/>
            <person name="Haft D.H."/>
            <person name="Selengut J."/>
            <person name="Ren Q."/>
            <person name="Brinkac L.M."/>
            <person name="Madupu R."/>
            <person name="Kolonay J.F."/>
            <person name="Durkin S.A."/>
            <person name="Daugherty S.C."/>
            <person name="Shetty J."/>
            <person name="Shvartsbeyn A."/>
            <person name="Gebregeorgis E."/>
            <person name="Geer K."/>
            <person name="Tsegaye G."/>
            <person name="Malek J.A."/>
            <person name="Ayodeji B."/>
            <person name="Shatsman S."/>
            <person name="McLeod M.P."/>
            <person name="Smajs D."/>
            <person name="Howell J.K."/>
            <person name="Pal S."/>
            <person name="Amin A."/>
            <person name="Vashisth P."/>
            <person name="McNeill T.Z."/>
            <person name="Xiang Q."/>
            <person name="Sodergren E."/>
            <person name="Baca E."/>
            <person name="Weinstock G.M."/>
            <person name="Norris S.J."/>
            <person name="Fraser C.M."/>
            <person name="Paulsen I.T."/>
        </authorList>
    </citation>
    <scope>NUCLEOTIDE SEQUENCE [LARGE SCALE GENOMIC DNA]</scope>
    <source>
        <strain>ATCC 35405 / DSM 14222 / CIP 103919 / JCM 8153 / KCTC 15104</strain>
    </source>
</reference>
<gene>
    <name evidence="1" type="primary">rpsB</name>
    <name type="ordered locus">TDE_2347</name>
</gene>
<accession>Q73K75</accession>
<protein>
    <recommendedName>
        <fullName evidence="1">Small ribosomal subunit protein uS2</fullName>
    </recommendedName>
    <alternativeName>
        <fullName evidence="3">30S ribosomal protein S2</fullName>
    </alternativeName>
</protein>
<dbReference type="EMBL" id="AE017226">
    <property type="protein sequence ID" value="AAS12865.1"/>
    <property type="molecule type" value="Genomic_DNA"/>
</dbReference>
<dbReference type="RefSeq" id="NP_972946.1">
    <property type="nucleotide sequence ID" value="NC_002967.9"/>
</dbReference>
<dbReference type="RefSeq" id="WP_002680262.1">
    <property type="nucleotide sequence ID" value="NC_002967.9"/>
</dbReference>
<dbReference type="SMR" id="Q73K75"/>
<dbReference type="STRING" id="243275.TDE_2347"/>
<dbReference type="PaxDb" id="243275-TDE_2347"/>
<dbReference type="GeneID" id="2739956"/>
<dbReference type="KEGG" id="tde:TDE_2347"/>
<dbReference type="PATRIC" id="fig|243275.7.peg.2215"/>
<dbReference type="eggNOG" id="COG0052">
    <property type="taxonomic scope" value="Bacteria"/>
</dbReference>
<dbReference type="HOGENOM" id="CLU_040318_1_3_12"/>
<dbReference type="OrthoDB" id="9808036at2"/>
<dbReference type="Proteomes" id="UP000008212">
    <property type="component" value="Chromosome"/>
</dbReference>
<dbReference type="GO" id="GO:0022627">
    <property type="term" value="C:cytosolic small ribosomal subunit"/>
    <property type="evidence" value="ECO:0007669"/>
    <property type="project" value="TreeGrafter"/>
</dbReference>
<dbReference type="GO" id="GO:0003735">
    <property type="term" value="F:structural constituent of ribosome"/>
    <property type="evidence" value="ECO:0007669"/>
    <property type="project" value="InterPro"/>
</dbReference>
<dbReference type="GO" id="GO:0006412">
    <property type="term" value="P:translation"/>
    <property type="evidence" value="ECO:0007669"/>
    <property type="project" value="UniProtKB-UniRule"/>
</dbReference>
<dbReference type="CDD" id="cd01425">
    <property type="entry name" value="RPS2"/>
    <property type="match status" value="1"/>
</dbReference>
<dbReference type="FunFam" id="1.10.287.610:FF:000001">
    <property type="entry name" value="30S ribosomal protein S2"/>
    <property type="match status" value="1"/>
</dbReference>
<dbReference type="Gene3D" id="3.40.50.10490">
    <property type="entry name" value="Glucose-6-phosphate isomerase like protein, domain 1"/>
    <property type="match status" value="1"/>
</dbReference>
<dbReference type="Gene3D" id="1.10.287.610">
    <property type="entry name" value="Helix hairpin bin"/>
    <property type="match status" value="1"/>
</dbReference>
<dbReference type="HAMAP" id="MF_00291_B">
    <property type="entry name" value="Ribosomal_uS2_B"/>
    <property type="match status" value="1"/>
</dbReference>
<dbReference type="InterPro" id="IPR001865">
    <property type="entry name" value="Ribosomal_uS2"/>
</dbReference>
<dbReference type="InterPro" id="IPR005706">
    <property type="entry name" value="Ribosomal_uS2_bac/mit/plastid"/>
</dbReference>
<dbReference type="InterPro" id="IPR018130">
    <property type="entry name" value="Ribosomal_uS2_CS"/>
</dbReference>
<dbReference type="InterPro" id="IPR023591">
    <property type="entry name" value="Ribosomal_uS2_flav_dom_sf"/>
</dbReference>
<dbReference type="NCBIfam" id="TIGR01011">
    <property type="entry name" value="rpsB_bact"/>
    <property type="match status" value="1"/>
</dbReference>
<dbReference type="PANTHER" id="PTHR12534">
    <property type="entry name" value="30S RIBOSOMAL PROTEIN S2 PROKARYOTIC AND ORGANELLAR"/>
    <property type="match status" value="1"/>
</dbReference>
<dbReference type="PANTHER" id="PTHR12534:SF0">
    <property type="entry name" value="SMALL RIBOSOMAL SUBUNIT PROTEIN US2M"/>
    <property type="match status" value="1"/>
</dbReference>
<dbReference type="Pfam" id="PF00318">
    <property type="entry name" value="Ribosomal_S2"/>
    <property type="match status" value="1"/>
</dbReference>
<dbReference type="PRINTS" id="PR00395">
    <property type="entry name" value="RIBOSOMALS2"/>
</dbReference>
<dbReference type="SUPFAM" id="SSF52313">
    <property type="entry name" value="Ribosomal protein S2"/>
    <property type="match status" value="1"/>
</dbReference>
<dbReference type="PROSITE" id="PS00962">
    <property type="entry name" value="RIBOSOMAL_S2_1"/>
    <property type="match status" value="1"/>
</dbReference>
<dbReference type="PROSITE" id="PS00963">
    <property type="entry name" value="RIBOSOMAL_S2_2"/>
    <property type="match status" value="1"/>
</dbReference>
<name>RS2_TREDE</name>
<comment type="similarity">
    <text evidence="1">Belongs to the universal ribosomal protein uS2 family.</text>
</comment>
<proteinExistence type="inferred from homology"/>
<organism>
    <name type="scientific">Treponema denticola (strain ATCC 35405 / DSM 14222 / CIP 103919 / JCM 8153 / KCTC 15104)</name>
    <dbReference type="NCBI Taxonomy" id="243275"/>
    <lineage>
        <taxon>Bacteria</taxon>
        <taxon>Pseudomonadati</taxon>
        <taxon>Spirochaetota</taxon>
        <taxon>Spirochaetia</taxon>
        <taxon>Spirochaetales</taxon>
        <taxon>Treponemataceae</taxon>
        <taxon>Treponema</taxon>
    </lineage>
</organism>